<protein>
    <recommendedName>
        <fullName evidence="8">Metal transporter cnnm-1</fullName>
    </recommendedName>
    <alternativeName>
        <fullName evidence="10">CNNM family homolog 1</fullName>
    </alternativeName>
</protein>
<evidence type="ECO:0000255" key="1"/>
<evidence type="ECO:0000255" key="2">
    <source>
        <dbReference type="PROSITE-ProRule" id="PRU00498"/>
    </source>
</evidence>
<evidence type="ECO:0000255" key="3">
    <source>
        <dbReference type="PROSITE-ProRule" id="PRU00703"/>
    </source>
</evidence>
<evidence type="ECO:0000255" key="4">
    <source>
        <dbReference type="PROSITE-ProRule" id="PRU01193"/>
    </source>
</evidence>
<evidence type="ECO:0000256" key="5">
    <source>
        <dbReference type="SAM" id="MobiDB-lite"/>
    </source>
</evidence>
<evidence type="ECO:0000269" key="6">
    <source>
    </source>
</evidence>
<evidence type="ECO:0000303" key="7">
    <source>
    </source>
</evidence>
<evidence type="ECO:0000305" key="8"/>
<evidence type="ECO:0000312" key="9">
    <source>
        <dbReference type="Proteomes" id="UP000001940"/>
    </source>
</evidence>
<evidence type="ECO:0000312" key="10">
    <source>
        <dbReference type="WormBase" id="C52D10.12"/>
    </source>
</evidence>
<proteinExistence type="evidence at transcript level"/>
<organism evidence="9">
    <name type="scientific">Caenorhabditis elegans</name>
    <dbReference type="NCBI Taxonomy" id="6239"/>
    <lineage>
        <taxon>Eukaryota</taxon>
        <taxon>Metazoa</taxon>
        <taxon>Ecdysozoa</taxon>
        <taxon>Nematoda</taxon>
        <taxon>Chromadorea</taxon>
        <taxon>Rhabditida</taxon>
        <taxon>Rhabditina</taxon>
        <taxon>Rhabditomorpha</taxon>
        <taxon>Rhabditoidea</taxon>
        <taxon>Rhabditidae</taxon>
        <taxon>Peloderinae</taxon>
        <taxon>Caenorhabditis</taxon>
    </lineage>
</organism>
<name>CNNM1_CAEEL</name>
<reference evidence="9" key="1">
    <citation type="journal article" date="1998" name="Science">
        <title>Genome sequence of the nematode C. elegans: a platform for investigating biology.</title>
        <authorList>
            <consortium name="The C. elegans sequencing consortium"/>
        </authorList>
    </citation>
    <scope>NUCLEOTIDE SEQUENCE [LARGE SCALE GENOMIC DNA]</scope>
    <source>
        <strain evidence="9">Bristol N2</strain>
    </source>
</reference>
<reference evidence="8" key="2">
    <citation type="journal article" date="2016" name="PLoS Genet.">
        <title>Mg2+ extrusion from intestinal epithelia by CNNM proteins is essential for gonadogenesis via AMPK-TORC1 signaling in Caenorhabditis elegans.</title>
        <authorList>
            <person name="Ishii T."/>
            <person name="Funato Y."/>
            <person name="Hashizume O."/>
            <person name="Yamazaki D."/>
            <person name="Hirata Y."/>
            <person name="Nishiwaki K."/>
            <person name="Kono N."/>
            <person name="Arai H."/>
            <person name="Miki H."/>
        </authorList>
    </citation>
    <scope>FUNCTION</scope>
    <scope>SUBCELLULAR LOCATION</scope>
    <scope>TISSUE SPECIFICITY</scope>
    <scope>DISRUPTION PHENOTYPE</scope>
</reference>
<gene>
    <name evidence="7 10" type="primary">cnnm-1</name>
    <name evidence="10" type="ORF">C52D10.12</name>
</gene>
<dbReference type="EMBL" id="BX284604">
    <property type="protein sequence ID" value="CAM36329.1"/>
    <property type="molecule type" value="Genomic_DNA"/>
</dbReference>
<dbReference type="RefSeq" id="NP_503052.1">
    <property type="nucleotide sequence ID" value="NM_070651.6"/>
</dbReference>
<dbReference type="SMR" id="A3QM97"/>
<dbReference type="FunCoup" id="A3QM97">
    <property type="interactions" value="380"/>
</dbReference>
<dbReference type="STRING" id="6239.C52D10.12.1"/>
<dbReference type="GlyCosmos" id="A3QM97">
    <property type="glycosylation" value="8 sites, No reported glycans"/>
</dbReference>
<dbReference type="iPTMnet" id="A3QM97"/>
<dbReference type="PaxDb" id="6239-C52D10.12.1"/>
<dbReference type="PeptideAtlas" id="A3QM97"/>
<dbReference type="EnsemblMetazoa" id="C52D10.12.1">
    <property type="protein sequence ID" value="C52D10.12.1"/>
    <property type="gene ID" value="WBGene00016879"/>
</dbReference>
<dbReference type="EnsemblMetazoa" id="C52D10.12.2">
    <property type="protein sequence ID" value="C52D10.12.2"/>
    <property type="gene ID" value="WBGene00016879"/>
</dbReference>
<dbReference type="GeneID" id="178499"/>
<dbReference type="KEGG" id="cel:CELE_C52D10.12"/>
<dbReference type="UCSC" id="C52D10.12.1">
    <property type="organism name" value="c. elegans"/>
</dbReference>
<dbReference type="AGR" id="WB:WBGene00016879"/>
<dbReference type="CTD" id="178499"/>
<dbReference type="WormBase" id="C52D10.12">
    <property type="protein sequence ID" value="CE28434"/>
    <property type="gene ID" value="WBGene00016879"/>
    <property type="gene designation" value="cnnm-1"/>
</dbReference>
<dbReference type="eggNOG" id="KOG2118">
    <property type="taxonomic scope" value="Eukaryota"/>
</dbReference>
<dbReference type="GeneTree" id="ENSGT00940000169533"/>
<dbReference type="HOGENOM" id="CLU_011310_1_2_1"/>
<dbReference type="InParanoid" id="A3QM97"/>
<dbReference type="OMA" id="MIQVVEG"/>
<dbReference type="OrthoDB" id="5353557at2759"/>
<dbReference type="PhylomeDB" id="A3QM97"/>
<dbReference type="PRO" id="PR:A3QM97"/>
<dbReference type="Proteomes" id="UP000001940">
    <property type="component" value="Chromosome IV"/>
</dbReference>
<dbReference type="Bgee" id="WBGene00016879">
    <property type="expression patterns" value="Expressed in pharyngeal muscle cell (C elegans) and 3 other cell types or tissues"/>
</dbReference>
<dbReference type="GO" id="GO:0016323">
    <property type="term" value="C:basolateral plasma membrane"/>
    <property type="evidence" value="ECO:0000314"/>
    <property type="project" value="UniProtKB"/>
</dbReference>
<dbReference type="GO" id="GO:0005886">
    <property type="term" value="C:plasma membrane"/>
    <property type="evidence" value="ECO:0000318"/>
    <property type="project" value="GO_Central"/>
</dbReference>
<dbReference type="GO" id="GO:0022857">
    <property type="term" value="F:transmembrane transporter activity"/>
    <property type="evidence" value="ECO:0000318"/>
    <property type="project" value="GO_Central"/>
</dbReference>
<dbReference type="GO" id="GO:0008340">
    <property type="term" value="P:determination of adult lifespan"/>
    <property type="evidence" value="ECO:0000315"/>
    <property type="project" value="UniProtKB"/>
</dbReference>
<dbReference type="GO" id="GO:0010960">
    <property type="term" value="P:magnesium ion homeostasis"/>
    <property type="evidence" value="ECO:0000316"/>
    <property type="project" value="UniProtKB"/>
</dbReference>
<dbReference type="GO" id="GO:0015693">
    <property type="term" value="P:magnesium ion transport"/>
    <property type="evidence" value="ECO:0000316"/>
    <property type="project" value="UniProtKB"/>
</dbReference>
<dbReference type="GO" id="GO:1905941">
    <property type="term" value="P:positive regulation of gonad development"/>
    <property type="evidence" value="ECO:0000316"/>
    <property type="project" value="UniProtKB"/>
</dbReference>
<dbReference type="GO" id="GO:0040018">
    <property type="term" value="P:positive regulation of multicellular organism growth"/>
    <property type="evidence" value="ECO:0000316"/>
    <property type="project" value="UniProtKB"/>
</dbReference>
<dbReference type="GO" id="GO:0040026">
    <property type="term" value="P:positive regulation of vulval development"/>
    <property type="evidence" value="ECO:0000316"/>
    <property type="project" value="UniProtKB"/>
</dbReference>
<dbReference type="GO" id="GO:0032026">
    <property type="term" value="P:response to magnesium ion"/>
    <property type="evidence" value="ECO:0000316"/>
    <property type="project" value="UniProtKB"/>
</dbReference>
<dbReference type="CDD" id="cd04590">
    <property type="entry name" value="CBS_pair_CorC_HlyC_assoc"/>
    <property type="match status" value="1"/>
</dbReference>
<dbReference type="FunFam" id="3.10.580.10:FF:000006">
    <property type="entry name" value="DUF21 and CBS domain protein"/>
    <property type="match status" value="1"/>
</dbReference>
<dbReference type="Gene3D" id="3.10.580.10">
    <property type="entry name" value="CBS-domain"/>
    <property type="match status" value="1"/>
</dbReference>
<dbReference type="InterPro" id="IPR045095">
    <property type="entry name" value="ACDP"/>
</dbReference>
<dbReference type="InterPro" id="IPR046342">
    <property type="entry name" value="CBS_dom_sf"/>
</dbReference>
<dbReference type="InterPro" id="IPR002550">
    <property type="entry name" value="CNNM"/>
</dbReference>
<dbReference type="InterPro" id="IPR044751">
    <property type="entry name" value="Ion_transp-like_CBS"/>
</dbReference>
<dbReference type="PANTHER" id="PTHR12064">
    <property type="entry name" value="METAL TRANSPORTER CNNM"/>
    <property type="match status" value="1"/>
</dbReference>
<dbReference type="PANTHER" id="PTHR12064:SF94">
    <property type="entry name" value="UNEXTENDED PROTEIN"/>
    <property type="match status" value="1"/>
</dbReference>
<dbReference type="Pfam" id="PF01595">
    <property type="entry name" value="CNNM"/>
    <property type="match status" value="1"/>
</dbReference>
<dbReference type="SUPFAM" id="SSF54631">
    <property type="entry name" value="CBS-domain pair"/>
    <property type="match status" value="1"/>
</dbReference>
<dbReference type="PROSITE" id="PS51371">
    <property type="entry name" value="CBS"/>
    <property type="match status" value="2"/>
</dbReference>
<dbReference type="PROSITE" id="PS51846">
    <property type="entry name" value="CNNM"/>
    <property type="match status" value="1"/>
</dbReference>
<sequence length="811" mass="89495">MSASCLRLLTLSLFILGQCNVTAAQNGVDDEVTTVTAILDSATTAAADNSTVPTQSASNNNTSQSSKIPTIFGMRVELPADDPFGYDKHGVCSVTPEEEFKVVIYGNHLDKIHQIIWTFTNNCSEPAYVIDALNHFKVHFNHKATFHLTLKLLPEMVHAYKMCVKPKVAPGSPPLGEIYPLDDISTWLTTERPPKEYFLPLPLQIACIGFLLCLSALFSGLTLGLMSLTPQELELVIKSGAIKEQKCAAKILPVRKKGNLLLCSLLLGNVIVNSAISILMGELTTGIYALIGSTMGIVIFGEILPQSICVKKGLEVGAHTISITQLFIFLTFPIAWPVSKLLDCLLGDEYQAYDRKRLMELIKMSITDNGQVSNELKIAVGAMEIADKVVKDVMTKIEDVFMLPDTTVLNAKTVMEIVKMGYTRIPVYQYGDKNNVTDMLFVKDLALLDPDDNFTVKTVCGYHKHPVKFVMNDTPLPNLLEAFKKGEGHLAMVKRLINTDDKHDPSYVLVGVVTLEDIVEEILQAEINDEFDIVSDNVNKVKIKKEQNRDATKYFGDHEAPQTMISMQLQMVALQWLVSNERGFRQEFLDTNVLERLIRSSARRVDVSALMAMGDDAINVPRLAKVYTKDELSDKYILILEGRIQVTIGASGMMFEAGPWHHFGGEIMAKLVDGAATLGRSMSIVGTSELSARRPDLMFKPDYSAVVKEDCTYLEISVSAYINAYKASLMQRERPLNDLSDVSHNSSAHNSNLSLVEKPGPITDPSAMLVPENVRKPSVVSMDSPKILVGLGQHPVAPVAEEEEMALLDQP</sequence>
<comment type="function">
    <text evidence="6">Probable metal transporter. Probably acts redundantly with the other metal transport proteins cnnm-2, cnnm-3, cnnm-4 and cnnm-5 to regulate Mg(2+) homeostasis. Promotes postembryonic gonad development by regulating Mg(2+) levels, probably via AMPK signaling.</text>
</comment>
<comment type="subcellular location">
    <subcellularLocation>
        <location evidence="6">Basolateral cell membrane</location>
        <topology evidence="1">Multi-pass membrane protein</topology>
    </subcellularLocation>
</comment>
<comment type="tissue specificity">
    <text evidence="6">Highly expressed in the intestine and in neurons, but it is also expressed in a variety of tissues including the pharynx, hypodermis, rectum and in muscles.</text>
</comment>
<comment type="disruption phenotype">
    <text evidence="6">No visible phenotype. Double knockout with cnnm-3 results in increased levels of intestinal Mg(2+) and reduced levels in other tissues. This Mg(2+) deficiency in tissues leads to a reduced lifespan, 100% sterility, and smaller animals that exhibit a developmental delay with defective gonad development and which therefore do not produce oocytes or form vulva. In addition, the gonad development defect in the cnnm-1 and cnnm-3 double knockout is rescued when the AMPK alpha subunit aak-2 is also knocked out. Quintuple knockout with cnnm-2, cnnm-3, cnnm-4 and cnnm-5 results in a reduced lifespan and 100% sterility.</text>
</comment>
<comment type="similarity">
    <text evidence="8">Belongs to the ACDP family.</text>
</comment>
<feature type="signal peptide" evidence="1">
    <location>
        <begin position="1"/>
        <end position="24"/>
    </location>
</feature>
<feature type="chain" id="PRO_5002658165" description="Metal transporter cnnm-1" evidence="8">
    <location>
        <begin position="25"/>
        <end position="811"/>
    </location>
</feature>
<feature type="topological domain" description="Extracellular" evidence="8">
    <location>
        <begin position="25"/>
        <end position="204"/>
    </location>
</feature>
<feature type="transmembrane region" description="Helical" evidence="1">
    <location>
        <begin position="205"/>
        <end position="225"/>
    </location>
</feature>
<feature type="topological domain" description="Cytoplasmic" evidence="8">
    <location>
        <begin position="226"/>
        <end position="259"/>
    </location>
</feature>
<feature type="transmembrane region" description="Helical" evidence="1">
    <location>
        <begin position="260"/>
        <end position="280"/>
    </location>
</feature>
<feature type="topological domain" description="Extracellular" evidence="8">
    <location>
        <begin position="281"/>
        <end position="284"/>
    </location>
</feature>
<feature type="transmembrane region" description="Helical" evidence="1">
    <location>
        <begin position="285"/>
        <end position="305"/>
    </location>
</feature>
<feature type="topological domain" description="Cytoplasmic" evidence="8">
    <location>
        <begin position="306"/>
        <end position="315"/>
    </location>
</feature>
<feature type="transmembrane region" description="Helical" evidence="1">
    <location>
        <begin position="316"/>
        <end position="336"/>
    </location>
</feature>
<feature type="topological domain" description="Extracellular" evidence="8">
    <location>
        <begin position="337"/>
        <end position="811"/>
    </location>
</feature>
<feature type="domain" description="CNNM transmembrane" evidence="4">
    <location>
        <begin position="197"/>
        <end position="376"/>
    </location>
</feature>
<feature type="domain" description="CBS 1" evidence="3">
    <location>
        <begin position="394"/>
        <end position="456"/>
    </location>
</feature>
<feature type="domain" description="CBS 2" evidence="3">
    <location>
        <begin position="462"/>
        <end position="530"/>
    </location>
</feature>
<feature type="region of interest" description="Disordered" evidence="5">
    <location>
        <begin position="741"/>
        <end position="760"/>
    </location>
</feature>
<feature type="compositionally biased region" description="Low complexity" evidence="5">
    <location>
        <begin position="743"/>
        <end position="755"/>
    </location>
</feature>
<feature type="glycosylation site" description="N-linked (GlcNAc...) asparagine" evidence="2">
    <location>
        <position position="20"/>
    </location>
</feature>
<feature type="glycosylation site" description="N-linked (GlcNAc...) asparagine" evidence="2">
    <location>
        <position position="49"/>
    </location>
</feature>
<feature type="glycosylation site" description="N-linked (GlcNAc...) asparagine" evidence="2">
    <location>
        <position position="61"/>
    </location>
</feature>
<feature type="glycosylation site" description="N-linked (GlcNAc...) asparagine" evidence="2">
    <location>
        <position position="122"/>
    </location>
</feature>
<feature type="glycosylation site" description="N-linked (GlcNAc...) asparagine" evidence="2">
    <location>
        <position position="435"/>
    </location>
</feature>
<feature type="glycosylation site" description="N-linked (GlcNAc...) asparagine" evidence="2">
    <location>
        <position position="453"/>
    </location>
</feature>
<feature type="glycosylation site" description="N-linked (GlcNAc...) asparagine" evidence="2">
    <location>
        <position position="745"/>
    </location>
</feature>
<feature type="glycosylation site" description="N-linked (GlcNAc...) asparagine" evidence="2">
    <location>
        <position position="752"/>
    </location>
</feature>
<accession>A3QM97</accession>
<keyword id="KW-0129">CBS domain</keyword>
<keyword id="KW-1003">Cell membrane</keyword>
<keyword id="KW-0325">Glycoprotein</keyword>
<keyword id="KW-0406">Ion transport</keyword>
<keyword id="KW-0472">Membrane</keyword>
<keyword id="KW-1185">Reference proteome</keyword>
<keyword id="KW-0677">Repeat</keyword>
<keyword id="KW-0732">Signal</keyword>
<keyword id="KW-0812">Transmembrane</keyword>
<keyword id="KW-1133">Transmembrane helix</keyword>
<keyword id="KW-0813">Transport</keyword>